<feature type="chain" id="PRO_0000090774" description="Pyruvate decarboxylase 1">
    <location>
        <begin position="1"/>
        <end position="610"/>
    </location>
</feature>
<feature type="region of interest" description="Thiamine pyrophosphate binding">
    <location>
        <begin position="437"/>
        <end position="519"/>
    </location>
</feature>
<feature type="binding site" evidence="1">
    <location>
        <position position="72"/>
    </location>
    <ligand>
        <name>substrate</name>
    </ligand>
</feature>
<feature type="binding site" evidence="1">
    <location>
        <position position="159"/>
    </location>
    <ligand>
        <name>substrate</name>
    </ligand>
</feature>
<feature type="binding site" evidence="1">
    <location>
        <position position="487"/>
    </location>
    <ligand>
        <name>Mg(2+)</name>
        <dbReference type="ChEBI" id="CHEBI:18420"/>
    </ligand>
</feature>
<feature type="binding site" evidence="1">
    <location>
        <position position="514"/>
    </location>
    <ligand>
        <name>Mg(2+)</name>
        <dbReference type="ChEBI" id="CHEBI:18420"/>
    </ligand>
</feature>
<feature type="binding site" evidence="1">
    <location>
        <position position="516"/>
    </location>
    <ligand>
        <name>Mg(2+)</name>
        <dbReference type="ChEBI" id="CHEBI:18420"/>
    </ligand>
</feature>
<feature type="binding site" evidence="1">
    <location>
        <position position="520"/>
    </location>
    <ligand>
        <name>substrate</name>
    </ligand>
</feature>
<feature type="sequence conflict" description="In Ref. 2; CAA35589." evidence="2" ref="2">
    <original>TV</original>
    <variation>MA</variation>
    <location>
        <begin position="567"/>
        <end position="568"/>
    </location>
</feature>
<feature type="sequence conflict" description="In Ref. 2; CAA35589." evidence="2" ref="2">
    <original>A</original>
    <variation>D</variation>
    <location>
        <position position="571"/>
    </location>
</feature>
<evidence type="ECO:0000250" key="1"/>
<evidence type="ECO:0000305" key="2"/>
<gene>
    <name type="primary">PDC1</name>
    <name type="synonym">PDC</name>
</gene>
<accession>P28516</accession>
<keyword id="KW-0210">Decarboxylase</keyword>
<keyword id="KW-0456">Lyase</keyword>
<keyword id="KW-0460">Magnesium</keyword>
<keyword id="KW-0479">Metal-binding</keyword>
<keyword id="KW-1185">Reference proteome</keyword>
<keyword id="KW-0346">Stress response</keyword>
<keyword id="KW-0786">Thiamine pyrophosphate</keyword>
<comment type="catalytic activity">
    <reaction>
        <text>a 2-oxocarboxylate + H(+) = an aldehyde + CO2</text>
        <dbReference type="Rhea" id="RHEA:11628"/>
        <dbReference type="ChEBI" id="CHEBI:15378"/>
        <dbReference type="ChEBI" id="CHEBI:16526"/>
        <dbReference type="ChEBI" id="CHEBI:17478"/>
        <dbReference type="ChEBI" id="CHEBI:35179"/>
        <dbReference type="EC" id="4.1.1.1"/>
    </reaction>
</comment>
<comment type="cofactor">
    <cofactor>
        <name>a metal cation</name>
        <dbReference type="ChEBI" id="CHEBI:25213"/>
    </cofactor>
    <text>Binds 1 metal ion per subunit.</text>
</comment>
<comment type="cofactor">
    <cofactor>
        <name>thiamine diphosphate</name>
        <dbReference type="ChEBI" id="CHEBI:58937"/>
    </cofactor>
    <text>Binds 1 thiamine pyrophosphate per subunit.</text>
</comment>
<comment type="subunit">
    <text evidence="2">Homotetramer.</text>
</comment>
<comment type="induction">
    <text>By hypoxic stress.</text>
</comment>
<comment type="similarity">
    <text evidence="2">Belongs to the TPP enzyme family.</text>
</comment>
<reference key="1">
    <citation type="journal article" date="1991" name="Plant Mol. Biol.">
        <title>Characterization of the maize pyruvate decarboxylase gene.</title>
        <authorList>
            <person name="Kelley P.M."/>
            <person name="Godfrey K."/>
            <person name="Lal S.K."/>
            <person name="Alleman M."/>
        </authorList>
    </citation>
    <scope>NUCLEOTIDE SEQUENCE [GENOMIC DNA]</scope>
    <source>
        <strain>cv. Wisconsin 22</strain>
    </source>
</reference>
<reference key="2">
    <citation type="journal article" date="1989" name="Plant Mol. Biol.">
        <title>Maize pyruvate decarboxylase mRNA is induced anaerobically.</title>
        <authorList>
            <person name="Kelley P.M."/>
        </authorList>
    </citation>
    <scope>NUCLEOTIDE SEQUENCE</scope>
</reference>
<proteinExistence type="evidence at transcript level"/>
<dbReference type="EC" id="4.1.1.1"/>
<dbReference type="EMBL" id="X59546">
    <property type="protein sequence ID" value="CAA42120.1"/>
    <property type="molecule type" value="Genomic_DNA"/>
</dbReference>
<dbReference type="EMBL" id="X17555">
    <property type="protein sequence ID" value="CAA35589.1"/>
    <property type="molecule type" value="mRNA"/>
</dbReference>
<dbReference type="PIR" id="S18347">
    <property type="entry name" value="DCZMP"/>
</dbReference>
<dbReference type="SMR" id="P28516"/>
<dbReference type="FunCoup" id="P28516">
    <property type="interactions" value="164"/>
</dbReference>
<dbReference type="STRING" id="4577.P28516"/>
<dbReference type="PaxDb" id="4577-AC197705.4_FGP001"/>
<dbReference type="MaizeGDB" id="25417"/>
<dbReference type="eggNOG" id="KOG1184">
    <property type="taxonomic scope" value="Eukaryota"/>
</dbReference>
<dbReference type="InParanoid" id="P28516"/>
<dbReference type="Proteomes" id="UP000007305">
    <property type="component" value="Unplaced"/>
</dbReference>
<dbReference type="ExpressionAtlas" id="P28516">
    <property type="expression patterns" value="baseline and differential"/>
</dbReference>
<dbReference type="GO" id="GO:0005829">
    <property type="term" value="C:cytosol"/>
    <property type="evidence" value="ECO:0000318"/>
    <property type="project" value="GO_Central"/>
</dbReference>
<dbReference type="GO" id="GO:0000287">
    <property type="term" value="F:magnesium ion binding"/>
    <property type="evidence" value="ECO:0007669"/>
    <property type="project" value="InterPro"/>
</dbReference>
<dbReference type="GO" id="GO:0004737">
    <property type="term" value="F:pyruvate decarboxylase activity"/>
    <property type="evidence" value="ECO:0000318"/>
    <property type="project" value="GO_Central"/>
</dbReference>
<dbReference type="GO" id="GO:0030976">
    <property type="term" value="F:thiamine pyrophosphate binding"/>
    <property type="evidence" value="ECO:0007669"/>
    <property type="project" value="InterPro"/>
</dbReference>
<dbReference type="GO" id="GO:0000949">
    <property type="term" value="P:aromatic amino acid family catabolic process to alcohol via Ehrlich pathway"/>
    <property type="evidence" value="ECO:0000318"/>
    <property type="project" value="GO_Central"/>
</dbReference>
<dbReference type="CDD" id="cd02005">
    <property type="entry name" value="TPP_PDC_IPDC"/>
    <property type="match status" value="1"/>
</dbReference>
<dbReference type="CDD" id="cd07038">
    <property type="entry name" value="TPP_PYR_PDC_IPDC_like"/>
    <property type="match status" value="1"/>
</dbReference>
<dbReference type="FunFam" id="3.40.50.1220:FF:000009">
    <property type="entry name" value="Pyruvate decarboxylase 1"/>
    <property type="match status" value="1"/>
</dbReference>
<dbReference type="FunFam" id="3.40.50.970:FF:000021">
    <property type="entry name" value="Pyruvate decarboxylase 1"/>
    <property type="match status" value="1"/>
</dbReference>
<dbReference type="FunFam" id="3.40.50.970:FF:000017">
    <property type="entry name" value="pyruvate decarboxylase 1"/>
    <property type="match status" value="1"/>
</dbReference>
<dbReference type="Gene3D" id="3.40.50.970">
    <property type="match status" value="2"/>
</dbReference>
<dbReference type="Gene3D" id="3.40.50.1220">
    <property type="entry name" value="TPP-binding domain"/>
    <property type="match status" value="1"/>
</dbReference>
<dbReference type="InterPro" id="IPR029035">
    <property type="entry name" value="DHS-like_NAD/FAD-binding_dom"/>
</dbReference>
<dbReference type="InterPro" id="IPR012110">
    <property type="entry name" value="PDC/IPDC-like"/>
</dbReference>
<dbReference type="InterPro" id="IPR029061">
    <property type="entry name" value="THDP-binding"/>
</dbReference>
<dbReference type="InterPro" id="IPR012000">
    <property type="entry name" value="Thiamin_PyroP_enz_cen_dom"/>
</dbReference>
<dbReference type="InterPro" id="IPR012001">
    <property type="entry name" value="Thiamin_PyroP_enz_TPP-bd_dom"/>
</dbReference>
<dbReference type="InterPro" id="IPR011766">
    <property type="entry name" value="TPP_enzyme_TPP-bd"/>
</dbReference>
<dbReference type="InterPro" id="IPR047214">
    <property type="entry name" value="TPP_PDC_IPDC"/>
</dbReference>
<dbReference type="InterPro" id="IPR047213">
    <property type="entry name" value="TPP_PYR_PDC_IPDC-like"/>
</dbReference>
<dbReference type="PANTHER" id="PTHR43452">
    <property type="entry name" value="PYRUVATE DECARBOXYLASE"/>
    <property type="match status" value="1"/>
</dbReference>
<dbReference type="PANTHER" id="PTHR43452:SF7">
    <property type="entry name" value="PYRUVATE DECARBOXYLASE 1"/>
    <property type="match status" value="1"/>
</dbReference>
<dbReference type="Pfam" id="PF02775">
    <property type="entry name" value="TPP_enzyme_C"/>
    <property type="match status" value="1"/>
</dbReference>
<dbReference type="Pfam" id="PF00205">
    <property type="entry name" value="TPP_enzyme_M"/>
    <property type="match status" value="1"/>
</dbReference>
<dbReference type="Pfam" id="PF02776">
    <property type="entry name" value="TPP_enzyme_N"/>
    <property type="match status" value="1"/>
</dbReference>
<dbReference type="PIRSF" id="PIRSF036565">
    <property type="entry name" value="Pyruvt_ip_decrb"/>
    <property type="match status" value="1"/>
</dbReference>
<dbReference type="SUPFAM" id="SSF52467">
    <property type="entry name" value="DHS-like NAD/FAD-binding domain"/>
    <property type="match status" value="1"/>
</dbReference>
<dbReference type="SUPFAM" id="SSF52518">
    <property type="entry name" value="Thiamin diphosphate-binding fold (THDP-binding)"/>
    <property type="match status" value="2"/>
</dbReference>
<name>PDC1_MAIZE</name>
<protein>
    <recommendedName>
        <fullName>Pyruvate decarboxylase 1</fullName>
        <shortName>PDC</shortName>
        <ecNumber>4.1.1.1</ecNumber>
    </recommendedName>
</protein>
<sequence>METLLAGNPANGVAKPTCNGVGALPVANSHAIIATPAAAAATLAPAGATLGRHLARRLVQIGASDVFAVPGDFNLTLLDYLIAEPGLTLVGCCNELNAGYAADGYARSRGVGACAVTFTVGGLSVLNAIAGAYSENLPVVCIVGGPNSNDYGTNRILHHTIGLPDFSQELRCFQTITCYQAIINNLDDAHEQIDTAIATALRESKPVYISVSCNLAGLSHPTFSRDPVPMFISPRLSNKANLEYAVEAAADFLNKAVKPVMVGGPKIRVAKAREAFAAVADASGYPFAVMPAAKGLVPEHHPRFIGTYWGAVSTTFCAEIVESADAYLFAGPIFNDYSSVGYSLLLKREKAVIVQPDRMVVGDGPAFGCILMPEFLRALAKRLRRNTTAYDNYRRIFVPDREPPNGKPNEPLRVNVLFKHIKGMLSGDSAVVAETGDSWFNCQKLRLPEGCGYEFQMQYGSIGWSVGATLGYAQAAKDKRVIACIGDGSFQVTAQDVSTMLRCGQKSIIFLINNGGYTIEVEIHDGPYNVIKNWDYTGLVNAIHNSEGNCWTMKVRTEEQLKEAIATVTGAKKDCLCFIEVIVHKDDTSKELLEWGSRVSAANSRPPNPQ</sequence>
<organism>
    <name type="scientific">Zea mays</name>
    <name type="common">Maize</name>
    <dbReference type="NCBI Taxonomy" id="4577"/>
    <lineage>
        <taxon>Eukaryota</taxon>
        <taxon>Viridiplantae</taxon>
        <taxon>Streptophyta</taxon>
        <taxon>Embryophyta</taxon>
        <taxon>Tracheophyta</taxon>
        <taxon>Spermatophyta</taxon>
        <taxon>Magnoliopsida</taxon>
        <taxon>Liliopsida</taxon>
        <taxon>Poales</taxon>
        <taxon>Poaceae</taxon>
        <taxon>PACMAD clade</taxon>
        <taxon>Panicoideae</taxon>
        <taxon>Andropogonodae</taxon>
        <taxon>Andropogoneae</taxon>
        <taxon>Tripsacinae</taxon>
        <taxon>Zea</taxon>
    </lineage>
</organism>